<name>RS10_HYDS0</name>
<comment type="function">
    <text evidence="1">Involved in the binding of tRNA to the ribosomes.</text>
</comment>
<comment type="subunit">
    <text evidence="1">Part of the 30S ribosomal subunit.</text>
</comment>
<comment type="similarity">
    <text evidence="1">Belongs to the universal ribosomal protein uS10 family.</text>
</comment>
<organism>
    <name type="scientific">Hydrogenobaculum sp. (strain Y04AAS1)</name>
    <dbReference type="NCBI Taxonomy" id="380749"/>
    <lineage>
        <taxon>Bacteria</taxon>
        <taxon>Pseudomonadati</taxon>
        <taxon>Aquificota</taxon>
        <taxon>Aquificia</taxon>
        <taxon>Aquificales</taxon>
        <taxon>Aquificaceae</taxon>
        <taxon>Hydrogenobaculum</taxon>
    </lineage>
</organism>
<protein>
    <recommendedName>
        <fullName evidence="1">Small ribosomal subunit protein uS10</fullName>
    </recommendedName>
    <alternativeName>
        <fullName evidence="2">30S ribosomal protein S10</fullName>
    </alternativeName>
</protein>
<proteinExistence type="inferred from homology"/>
<reference key="1">
    <citation type="journal article" date="2009" name="J. Bacteriol.">
        <title>Complete and draft genome sequences of six members of the Aquificales.</title>
        <authorList>
            <person name="Reysenbach A.-L."/>
            <person name="Hamamura N."/>
            <person name="Podar M."/>
            <person name="Griffiths E."/>
            <person name="Ferreira S."/>
            <person name="Hochstein R."/>
            <person name="Heidelberg J."/>
            <person name="Johnson J."/>
            <person name="Mead D."/>
            <person name="Pohorille A."/>
            <person name="Sarmiento M."/>
            <person name="Schweighofer K."/>
            <person name="Seshadri R."/>
            <person name="Voytek M.A."/>
        </authorList>
    </citation>
    <scope>NUCLEOTIDE SEQUENCE [LARGE SCALE GENOMIC DNA]</scope>
    <source>
        <strain>Y04AAS1</strain>
    </source>
</reference>
<feature type="chain" id="PRO_1000127137" description="Small ribosomal subunit protein uS10">
    <location>
        <begin position="1"/>
        <end position="104"/>
    </location>
</feature>
<sequence length="104" mass="12207">MEQDKIRIKLKSYDYKLLDQSVKQIVETVKRTGSSVKGPIPLPTSRRRWVVLRSPHKFDQSREHFEIREFKRMLDIVKITPQTIESLMEISLPAGVDIEVKMRG</sequence>
<dbReference type="EMBL" id="CP001130">
    <property type="protein sequence ID" value="ACG56954.1"/>
    <property type="molecule type" value="Genomic_DNA"/>
</dbReference>
<dbReference type="RefSeq" id="WP_012513310.1">
    <property type="nucleotide sequence ID" value="NC_011126.1"/>
</dbReference>
<dbReference type="SMR" id="B4U743"/>
<dbReference type="STRING" id="380749.HY04AAS1_0264"/>
<dbReference type="KEGG" id="hya:HY04AAS1_0264"/>
<dbReference type="eggNOG" id="COG0051">
    <property type="taxonomic scope" value="Bacteria"/>
</dbReference>
<dbReference type="HOGENOM" id="CLU_122625_1_3_0"/>
<dbReference type="OrthoDB" id="9804464at2"/>
<dbReference type="GO" id="GO:1990904">
    <property type="term" value="C:ribonucleoprotein complex"/>
    <property type="evidence" value="ECO:0007669"/>
    <property type="project" value="UniProtKB-KW"/>
</dbReference>
<dbReference type="GO" id="GO:0005840">
    <property type="term" value="C:ribosome"/>
    <property type="evidence" value="ECO:0007669"/>
    <property type="project" value="UniProtKB-KW"/>
</dbReference>
<dbReference type="GO" id="GO:0003735">
    <property type="term" value="F:structural constituent of ribosome"/>
    <property type="evidence" value="ECO:0007669"/>
    <property type="project" value="InterPro"/>
</dbReference>
<dbReference type="GO" id="GO:0000049">
    <property type="term" value="F:tRNA binding"/>
    <property type="evidence" value="ECO:0007669"/>
    <property type="project" value="UniProtKB-UniRule"/>
</dbReference>
<dbReference type="GO" id="GO:0006412">
    <property type="term" value="P:translation"/>
    <property type="evidence" value="ECO:0007669"/>
    <property type="project" value="UniProtKB-UniRule"/>
</dbReference>
<dbReference type="FunFam" id="3.30.70.600:FF:000003">
    <property type="entry name" value="30S ribosomal protein S10"/>
    <property type="match status" value="1"/>
</dbReference>
<dbReference type="Gene3D" id="3.30.70.600">
    <property type="entry name" value="Ribosomal protein S10 domain"/>
    <property type="match status" value="1"/>
</dbReference>
<dbReference type="HAMAP" id="MF_00508">
    <property type="entry name" value="Ribosomal_uS10"/>
    <property type="match status" value="1"/>
</dbReference>
<dbReference type="InterPro" id="IPR001848">
    <property type="entry name" value="Ribosomal_uS10"/>
</dbReference>
<dbReference type="InterPro" id="IPR018268">
    <property type="entry name" value="Ribosomal_uS10_CS"/>
</dbReference>
<dbReference type="InterPro" id="IPR027486">
    <property type="entry name" value="Ribosomal_uS10_dom"/>
</dbReference>
<dbReference type="InterPro" id="IPR036838">
    <property type="entry name" value="Ribosomal_uS10_dom_sf"/>
</dbReference>
<dbReference type="NCBIfam" id="NF001861">
    <property type="entry name" value="PRK00596.1"/>
    <property type="match status" value="1"/>
</dbReference>
<dbReference type="NCBIfam" id="TIGR01049">
    <property type="entry name" value="rpsJ_bact"/>
    <property type="match status" value="1"/>
</dbReference>
<dbReference type="PANTHER" id="PTHR11700">
    <property type="entry name" value="30S RIBOSOMAL PROTEIN S10 FAMILY MEMBER"/>
    <property type="match status" value="1"/>
</dbReference>
<dbReference type="Pfam" id="PF00338">
    <property type="entry name" value="Ribosomal_S10"/>
    <property type="match status" value="1"/>
</dbReference>
<dbReference type="PRINTS" id="PR00971">
    <property type="entry name" value="RIBOSOMALS10"/>
</dbReference>
<dbReference type="SMART" id="SM01403">
    <property type="entry name" value="Ribosomal_S10"/>
    <property type="match status" value="1"/>
</dbReference>
<dbReference type="SUPFAM" id="SSF54999">
    <property type="entry name" value="Ribosomal protein S10"/>
    <property type="match status" value="1"/>
</dbReference>
<dbReference type="PROSITE" id="PS00361">
    <property type="entry name" value="RIBOSOMAL_S10"/>
    <property type="match status" value="1"/>
</dbReference>
<gene>
    <name evidence="1" type="primary">rpsJ</name>
    <name type="ordered locus">HY04AAS1_0264</name>
</gene>
<evidence type="ECO:0000255" key="1">
    <source>
        <dbReference type="HAMAP-Rule" id="MF_00508"/>
    </source>
</evidence>
<evidence type="ECO:0000305" key="2"/>
<keyword id="KW-0687">Ribonucleoprotein</keyword>
<keyword id="KW-0689">Ribosomal protein</keyword>
<accession>B4U743</accession>